<organism>
    <name type="scientific">Saccharomyces paradoxus</name>
    <name type="common">Yeast</name>
    <name type="synonym">Saccharomyces douglasii</name>
    <dbReference type="NCBI Taxonomy" id="27291"/>
    <lineage>
        <taxon>Eukaryota</taxon>
        <taxon>Fungi</taxon>
        <taxon>Dikarya</taxon>
        <taxon>Ascomycota</taxon>
        <taxon>Saccharomycotina</taxon>
        <taxon>Saccharomycetes</taxon>
        <taxon>Saccharomycetales</taxon>
        <taxon>Saccharomycetaceae</taxon>
        <taxon>Saccharomyces</taxon>
    </lineage>
</organism>
<evidence type="ECO:0000250" key="1"/>
<evidence type="ECO:0000305" key="2"/>
<protein>
    <recommendedName>
        <fullName evidence="2">Small ribosomal subunit protein uS3m</fullName>
    </recommendedName>
    <alternativeName>
        <fullName>Ribosomal protein VAR1, mitochondrial</fullName>
    </alternativeName>
</protein>
<dbReference type="EMBL" id="U49822">
    <property type="protein sequence ID" value="AAA96260.1"/>
    <property type="molecule type" value="Genomic_DNA"/>
</dbReference>
<dbReference type="SMR" id="Q35905"/>
<dbReference type="GO" id="GO:0005739">
    <property type="term" value="C:mitochondrion"/>
    <property type="evidence" value="ECO:0007669"/>
    <property type="project" value="UniProtKB-SubCell"/>
</dbReference>
<dbReference type="GO" id="GO:1990904">
    <property type="term" value="C:ribonucleoprotein complex"/>
    <property type="evidence" value="ECO:0007669"/>
    <property type="project" value="UniProtKB-KW"/>
</dbReference>
<dbReference type="GO" id="GO:0005840">
    <property type="term" value="C:ribosome"/>
    <property type="evidence" value="ECO:0007669"/>
    <property type="project" value="UniProtKB-KW"/>
</dbReference>
<dbReference type="GO" id="GO:0003735">
    <property type="term" value="F:structural constituent of ribosome"/>
    <property type="evidence" value="ECO:0007669"/>
    <property type="project" value="InterPro"/>
</dbReference>
<dbReference type="GO" id="GO:0006412">
    <property type="term" value="P:translation"/>
    <property type="evidence" value="ECO:0007669"/>
    <property type="project" value="InterPro"/>
</dbReference>
<dbReference type="InterPro" id="IPR007980">
    <property type="entry name" value="Ribosomal_uS3m_fun"/>
</dbReference>
<dbReference type="Pfam" id="PF05316">
    <property type="entry name" value="VAR1"/>
    <property type="match status" value="1"/>
</dbReference>
<geneLocation type="mitochondrion"/>
<sequence length="373" mass="44691">MKLRLLNMILSMMNKTNNNNNNNINNKKLLLKNMLLDMNNKRMNNMKTMLKNNNMNINNKLQHLNNMNNWNTQIYNYNKNMEIMNIMNDKLINKLLYKMMTLKLNNMNINKIIMSKTINQHSLNKLNIKFYYYYNNDINNMNNNNNNYYMNMMNKLMNIMNNNMNNSLCNILSYYYNKKVTIESIKLSYIYLNSDIFSKYISLNDMNKYNNGILTNYQRMLNNIMPKLNDHNISMNYINNINNINNNKYNNMINLLNNNNNNNNNNNNNNNNYIDNINNIYNNMTIDNIPMDILMYKYLVGWSIKFKGRLNNNNGRTSTTNLLNGTFNNKKYLWSNINNNYKLNYIPSNHNLYNNSNINKNGKYNIKVKLNFI</sequence>
<comment type="function">
    <text evidence="1">Essential for mitochondrial protein synthesis and required for the maturation of small ribosomal subunits.</text>
</comment>
<comment type="subcellular location">
    <subcellularLocation>
        <location>Mitochondrion</location>
    </subcellularLocation>
</comment>
<comment type="similarity">
    <text evidence="2">Belongs to the universal ribosomal protein uS3 family.</text>
</comment>
<keyword id="KW-0496">Mitochondrion</keyword>
<keyword id="KW-0687">Ribonucleoprotein</keyword>
<keyword id="KW-0689">Ribosomal protein</keyword>
<feature type="chain" id="PRO_0000220073" description="Small ribosomal subunit protein uS3m">
    <location>
        <begin position="1"/>
        <end position="373"/>
    </location>
</feature>
<reference key="1">
    <citation type="journal article" date="1997" name="Mol. Biol. Evol.">
        <title>Evolution of mitochondrial genomes in yeast: a study of mitochondrial divergence in two closely related species, Saccharomyces douglasii and Saccharomyces cerevisiae.</title>
        <authorList>
            <person name="Cardazzo B."/>
            <person name="Rinaldi T."/>
            <person name="Frontali L."/>
            <person name="Carignani G."/>
            <person name="Palleschi C."/>
        </authorList>
    </citation>
    <scope>NUCLEOTIDE SEQUENCE [GENOMIC DNA]</scope>
    <source>
        <strain>KS158/3-2/BIE2</strain>
    </source>
</reference>
<accession>Q35905</accession>
<name>RMAR_SACPA</name>
<proteinExistence type="inferred from homology"/>
<gene>
    <name type="primary">VAR1</name>
</gene>